<protein>
    <recommendedName>
        <fullName>Ig lambda-1 chain C region</fullName>
    </recommendedName>
</protein>
<name>LAC1_MOUSE</name>
<evidence type="ECO:0000305" key="1"/>
<evidence type="ECO:0007829" key="2">
    <source>
        <dbReference type="PDB" id="1JN6"/>
    </source>
</evidence>
<keyword id="KW-0002">3D-structure</keyword>
<keyword id="KW-0903">Direct protein sequencing</keyword>
<keyword id="KW-1015">Disulfide bond</keyword>
<keyword id="KW-0393">Immunoglobulin domain</keyword>
<keyword id="KW-1185">Reference proteome</keyword>
<dbReference type="EMBL" id="J00582">
    <property type="protein sequence ID" value="AAA51636.1"/>
    <property type="molecule type" value="mRNA"/>
</dbReference>
<dbReference type="EMBL" id="J00587">
    <property type="protein sequence ID" value="AAB59672.1"/>
    <property type="molecule type" value="Genomic_DNA"/>
</dbReference>
<dbReference type="PIR" id="A93922">
    <property type="entry name" value="L1MS"/>
</dbReference>
<dbReference type="PDB" id="1JN6">
    <property type="method" value="X-ray"/>
    <property type="resolution" value="2.70 A"/>
    <property type="chains" value="A=1-100"/>
</dbReference>
<dbReference type="PDB" id="1JNH">
    <property type="method" value="X-ray"/>
    <property type="resolution" value="2.85 A"/>
    <property type="chains" value="A/C/E/G=1-100"/>
</dbReference>
<dbReference type="PDBsum" id="1JN6"/>
<dbReference type="PDBsum" id="1JNH"/>
<dbReference type="SMR" id="P01843"/>
<dbReference type="FunCoup" id="P01843">
    <property type="interactions" value="379"/>
</dbReference>
<dbReference type="MINT" id="P01843"/>
<dbReference type="GlyGen" id="P01843">
    <property type="glycosylation" value="1 site, 1 O-linked glycan (1 site)"/>
</dbReference>
<dbReference type="iPTMnet" id="P01843"/>
<dbReference type="jPOST" id="P01843"/>
<dbReference type="PeptideAtlas" id="P01843"/>
<dbReference type="ABCD" id="P01843">
    <property type="antibodies" value="1 sequenced antibody"/>
</dbReference>
<dbReference type="InParanoid" id="P01843"/>
<dbReference type="OMA" id="LWWVFGG"/>
<dbReference type="EvolutionaryTrace" id="P01843"/>
<dbReference type="Proteomes" id="UP000000589">
    <property type="component" value="Unplaced"/>
</dbReference>
<dbReference type="RNAct" id="P01843">
    <property type="molecule type" value="protein"/>
</dbReference>
<dbReference type="GO" id="GO:0071735">
    <property type="term" value="C:IgG immunoglobulin complex"/>
    <property type="evidence" value="ECO:0000318"/>
    <property type="project" value="GO_Central"/>
</dbReference>
<dbReference type="GO" id="GO:0005886">
    <property type="term" value="C:plasma membrane"/>
    <property type="evidence" value="ECO:0000304"/>
    <property type="project" value="Reactome"/>
</dbReference>
<dbReference type="GO" id="GO:0003823">
    <property type="term" value="F:antigen binding"/>
    <property type="evidence" value="ECO:0000318"/>
    <property type="project" value="GO_Central"/>
</dbReference>
<dbReference type="GO" id="GO:0016064">
    <property type="term" value="P:immunoglobulin mediated immune response"/>
    <property type="evidence" value="ECO:0000318"/>
    <property type="project" value="GO_Central"/>
</dbReference>
<dbReference type="CDD" id="cd07699">
    <property type="entry name" value="IgC1_L"/>
    <property type="match status" value="1"/>
</dbReference>
<dbReference type="FunFam" id="2.60.40.10:FF:000283">
    <property type="entry name" value="Immunoglobulin kappa constant"/>
    <property type="match status" value="1"/>
</dbReference>
<dbReference type="Gene3D" id="2.60.40.10">
    <property type="entry name" value="Immunoglobulins"/>
    <property type="match status" value="1"/>
</dbReference>
<dbReference type="InterPro" id="IPR007110">
    <property type="entry name" value="Ig-like_dom"/>
</dbReference>
<dbReference type="InterPro" id="IPR036179">
    <property type="entry name" value="Ig-like_dom_sf"/>
</dbReference>
<dbReference type="InterPro" id="IPR013783">
    <property type="entry name" value="Ig-like_fold"/>
</dbReference>
<dbReference type="InterPro" id="IPR003006">
    <property type="entry name" value="Ig/MHC_CS"/>
</dbReference>
<dbReference type="InterPro" id="IPR003597">
    <property type="entry name" value="Ig_C1-set"/>
</dbReference>
<dbReference type="InterPro" id="IPR050160">
    <property type="entry name" value="MHC/Immunoglobulin"/>
</dbReference>
<dbReference type="PANTHER" id="PTHR19944:SF98">
    <property type="entry name" value="IG-LIKE DOMAIN-CONTAINING PROTEIN"/>
    <property type="match status" value="1"/>
</dbReference>
<dbReference type="PANTHER" id="PTHR19944">
    <property type="entry name" value="MHC CLASS II-RELATED"/>
    <property type="match status" value="1"/>
</dbReference>
<dbReference type="Pfam" id="PF07654">
    <property type="entry name" value="C1-set"/>
    <property type="match status" value="1"/>
</dbReference>
<dbReference type="SMART" id="SM00407">
    <property type="entry name" value="IGc1"/>
    <property type="match status" value="1"/>
</dbReference>
<dbReference type="SUPFAM" id="SSF48726">
    <property type="entry name" value="Immunoglobulin"/>
    <property type="match status" value="1"/>
</dbReference>
<dbReference type="PROSITE" id="PS50835">
    <property type="entry name" value="IG_LIKE"/>
    <property type="match status" value="1"/>
</dbReference>
<dbReference type="PROSITE" id="PS00290">
    <property type="entry name" value="IG_MHC"/>
    <property type="match status" value="1"/>
</dbReference>
<proteinExistence type="evidence at protein level"/>
<organism>
    <name type="scientific">Mus musculus</name>
    <name type="common">Mouse</name>
    <dbReference type="NCBI Taxonomy" id="10090"/>
    <lineage>
        <taxon>Eukaryota</taxon>
        <taxon>Metazoa</taxon>
        <taxon>Chordata</taxon>
        <taxon>Craniata</taxon>
        <taxon>Vertebrata</taxon>
        <taxon>Euteleostomi</taxon>
        <taxon>Mammalia</taxon>
        <taxon>Eutheria</taxon>
        <taxon>Euarchontoglires</taxon>
        <taxon>Glires</taxon>
        <taxon>Rodentia</taxon>
        <taxon>Myomorpha</taxon>
        <taxon>Muroidea</taxon>
        <taxon>Muridae</taxon>
        <taxon>Murinae</taxon>
        <taxon>Mus</taxon>
        <taxon>Mus</taxon>
    </lineage>
</organism>
<accession>P01843</accession>
<comment type="miscellaneous">
    <text>The MOPC-315 cell line produces 2 light chains, 1 normal lambda-2 chain and 1 abnormal lambda-1 chain that is missing a large part of the V region. The C region sequence (shown here) appears completely normal.</text>
</comment>
<reference key="1">
    <citation type="journal article" date="1982" name="Proc. Natl. Acad. Sci. U.S.A.">
        <title>Evolution of mouse immunoglobulin lambda genes.</title>
        <authorList>
            <person name="Selsing E."/>
            <person name="Miller J."/>
            <person name="Wilson R."/>
            <person name="Storb U."/>
        </authorList>
    </citation>
    <scope>NUCLEOTIDE SEQUENCE [GENOMIC DNA]</scope>
</reference>
<reference key="2">
    <citation type="journal article" date="1981" name="Nature">
        <title>Dual expression of lambda genes in the MOPC-315 plasmacytoma.</title>
        <authorList>
            <person name="Bothwell A.L.M."/>
            <person name="Paskind M."/>
            <person name="Schwartz R.C."/>
            <person name="Sonenshein G.E."/>
            <person name="Gefter M.L."/>
            <person name="Baltimore D."/>
        </authorList>
    </citation>
    <scope>NUCLEOTIDE SEQUENCE [MRNA] (MOPC 315)</scope>
</reference>
<reference key="3">
    <citation type="journal article" date="1982" name="Nature">
        <title>Somatic variants of murine immunoglobulin lambda light chains.</title>
        <authorList>
            <person name="Bothwell A.L.M."/>
            <person name="Paskind M."/>
            <person name="Reth M."/>
            <person name="Imanishi-Kari T."/>
            <person name="Rajewsky K."/>
            <person name="Baltimore D."/>
        </authorList>
    </citation>
    <scope>NUCLEOTIDE SEQUENCE (S43)</scope>
</reference>
<reference key="4">
    <citation type="journal article" date="1971" name="Proc. Natl. Acad. Sci. U.S.A.">
        <title>Amino acid sequences of two mouse immunoglobulin lambda chains.</title>
        <authorList>
            <person name="Appella E."/>
        </authorList>
    </citation>
    <scope>PROTEIN SEQUENCE (MYELOMA PROTEIN MOPC 104E)</scope>
</reference>
<feature type="chain" id="PRO_0000153608" description="Ig lambda-1 chain C region">
    <location>
        <begin position="1" status="less than"/>
        <end position="105"/>
    </location>
</feature>
<feature type="domain" description="Ig-like">
    <location>
        <begin position="6"/>
        <end position="100"/>
    </location>
</feature>
<feature type="disulfide bond">
    <location>
        <begin position="27"/>
        <end position="86"/>
    </location>
</feature>
<feature type="disulfide bond" description="Interchain (with heavy chain)">
    <location>
        <position position="104"/>
    </location>
</feature>
<feature type="sequence conflict" description="In Ref. 4; AA sequence." evidence="1" ref="4">
    <original>ET</original>
    <variation>TE</variation>
    <location>
        <begin position="19"/>
        <end position="20"/>
    </location>
</feature>
<feature type="sequence conflict" description="In Ref. 4; AA sequence." evidence="1" ref="4">
    <original>Q</original>
    <variation>E</variation>
    <location>
        <position position="56"/>
    </location>
</feature>
<feature type="sequence conflict" description="In Ref. 4; AA sequence." evidence="1" ref="4">
    <location>
        <position position="75"/>
    </location>
</feature>
<feature type="sequence conflict" description="In Ref. 4; AA sequence." evidence="1" ref="4">
    <original>HS</original>
    <variation>SH</variation>
    <location>
        <begin position="81"/>
        <end position="82"/>
    </location>
</feature>
<feature type="sequence conflict" description="In Ref. 4; AA sequence." evidence="1" ref="4">
    <original>S</original>
    <variation>SS</variation>
    <location>
        <position position="85"/>
    </location>
</feature>
<feature type="sequence conflict" description="In Ref. 4; AA sequence." evidence="1" ref="4">
    <original>E</original>
    <variation>Q</variation>
    <location>
        <position position="96"/>
    </location>
</feature>
<feature type="non-terminal residue">
    <location>
        <position position="1"/>
    </location>
</feature>
<feature type="strand" evidence="2">
    <location>
        <begin position="7"/>
        <end position="11"/>
    </location>
</feature>
<feature type="helix" evidence="2">
    <location>
        <begin position="15"/>
        <end position="18"/>
    </location>
</feature>
<feature type="turn" evidence="2">
    <location>
        <begin position="19"/>
        <end position="21"/>
    </location>
</feature>
<feature type="strand" evidence="2">
    <location>
        <begin position="22"/>
        <end position="35"/>
    </location>
</feature>
<feature type="strand" evidence="2">
    <location>
        <begin position="38"/>
        <end position="43"/>
    </location>
</feature>
<feature type="strand" evidence="2">
    <location>
        <begin position="46"/>
        <end position="48"/>
    </location>
</feature>
<feature type="strand" evidence="2">
    <location>
        <begin position="52"/>
        <end position="54"/>
    </location>
</feature>
<feature type="strand" evidence="2">
    <location>
        <begin position="58"/>
        <end position="60"/>
    </location>
</feature>
<feature type="turn" evidence="2">
    <location>
        <begin position="61"/>
        <end position="63"/>
    </location>
</feature>
<feature type="strand" evidence="2">
    <location>
        <begin position="64"/>
        <end position="74"/>
    </location>
</feature>
<feature type="helix" evidence="2">
    <location>
        <begin position="75"/>
        <end position="80"/>
    </location>
</feature>
<feature type="strand" evidence="2">
    <location>
        <begin position="84"/>
        <end position="90"/>
    </location>
</feature>
<feature type="strand" evidence="2">
    <location>
        <begin position="93"/>
        <end position="99"/>
    </location>
</feature>
<sequence>QPKSSPSVTLFPPSSEELETNKATLVCTITDFYPGVVTVDWKVDGTPVTQGMETTQPSKQSNNKYMASSYLTLTARAWERHSSYSCQVTHEGHTVEKSLSRADCS</sequence>